<name>GPTC2_HUMAN</name>
<accession>Q9NW75</accession>
<accession>Q5VYK7</accession>
<accession>Q5VYK8</accession>
<accession>Q86YE7</accession>
<organism>
    <name type="scientific">Homo sapiens</name>
    <name type="common">Human</name>
    <dbReference type="NCBI Taxonomy" id="9606"/>
    <lineage>
        <taxon>Eukaryota</taxon>
        <taxon>Metazoa</taxon>
        <taxon>Chordata</taxon>
        <taxon>Craniata</taxon>
        <taxon>Vertebrata</taxon>
        <taxon>Euteleostomi</taxon>
        <taxon>Mammalia</taxon>
        <taxon>Eutheria</taxon>
        <taxon>Euarchontoglires</taxon>
        <taxon>Primates</taxon>
        <taxon>Haplorrhini</taxon>
        <taxon>Catarrhini</taxon>
        <taxon>Hominidae</taxon>
        <taxon>Homo</taxon>
    </lineage>
</organism>
<feature type="chain" id="PRO_0000087566" description="G patch domain-containing protein 2">
    <location>
        <begin position="1"/>
        <end position="528"/>
    </location>
</feature>
<feature type="domain" description="G-patch" evidence="1">
    <location>
        <begin position="467"/>
        <end position="513"/>
    </location>
</feature>
<feature type="region of interest" description="Disordered" evidence="2">
    <location>
        <begin position="36"/>
        <end position="119"/>
    </location>
</feature>
<feature type="region of interest" description="Disordered" evidence="2">
    <location>
        <begin position="232"/>
        <end position="282"/>
    </location>
</feature>
<feature type="region of interest" description="Disordered" evidence="2">
    <location>
        <begin position="487"/>
        <end position="528"/>
    </location>
</feature>
<feature type="compositionally biased region" description="Basic residues" evidence="2">
    <location>
        <begin position="63"/>
        <end position="77"/>
    </location>
</feature>
<feature type="compositionally biased region" description="Basic and acidic residues" evidence="2">
    <location>
        <begin position="98"/>
        <end position="117"/>
    </location>
</feature>
<feature type="compositionally biased region" description="Basic and acidic residues" evidence="2">
    <location>
        <begin position="239"/>
        <end position="252"/>
    </location>
</feature>
<feature type="compositionally biased region" description="Polar residues" evidence="2">
    <location>
        <begin position="514"/>
        <end position="528"/>
    </location>
</feature>
<feature type="modified residue" description="Phosphoserine" evidence="7 8 9">
    <location>
        <position position="115"/>
    </location>
</feature>
<feature type="modified residue" description="Phosphoserine" evidence="8 9">
    <location>
        <position position="117"/>
    </location>
</feature>
<feature type="modified residue" description="Phosphoserine" evidence="10">
    <location>
        <position position="146"/>
    </location>
</feature>
<feature type="modified residue" description="Phosphoserine" evidence="6 7 10">
    <location>
        <position position="195"/>
    </location>
</feature>
<feature type="splice variant" id="VSP_010527" description="In isoform 2." evidence="4">
    <original>VPIPGPVGNK</original>
    <variation>ATNWTSEIPL</variation>
    <location>
        <begin position="367"/>
        <end position="376"/>
    </location>
</feature>
<feature type="splice variant" id="VSP_010528" description="In isoform 2." evidence="4">
    <location>
        <begin position="377"/>
        <end position="528"/>
    </location>
</feature>
<feature type="sequence conflict" description="In Ref. 4; AAH63474." evidence="5" ref="4">
    <original>G</original>
    <variation>A</variation>
    <location>
        <position position="220"/>
    </location>
</feature>
<feature type="sequence conflict" description="In Ref. 4; AAH42193." evidence="5" ref="4">
    <original>D</original>
    <variation>N</variation>
    <location>
        <position position="225"/>
    </location>
</feature>
<keyword id="KW-0025">Alternative splicing</keyword>
<keyword id="KW-0539">Nucleus</keyword>
<keyword id="KW-0597">Phosphoprotein</keyword>
<keyword id="KW-1267">Proteomics identification</keyword>
<keyword id="KW-1185">Reference proteome</keyword>
<evidence type="ECO:0000255" key="1">
    <source>
        <dbReference type="PROSITE-ProRule" id="PRU00092"/>
    </source>
</evidence>
<evidence type="ECO:0000256" key="2">
    <source>
        <dbReference type="SAM" id="MobiDB-lite"/>
    </source>
</evidence>
<evidence type="ECO:0000269" key="3">
    <source>
    </source>
</evidence>
<evidence type="ECO:0000303" key="4">
    <source>
    </source>
</evidence>
<evidence type="ECO:0000305" key="5"/>
<evidence type="ECO:0007744" key="6">
    <source>
    </source>
</evidence>
<evidence type="ECO:0007744" key="7">
    <source>
    </source>
</evidence>
<evidence type="ECO:0007744" key="8">
    <source>
    </source>
</evidence>
<evidence type="ECO:0007744" key="9">
    <source>
    </source>
</evidence>
<evidence type="ECO:0007744" key="10">
    <source>
    </source>
</evidence>
<reference key="1">
    <citation type="journal article" date="2004" name="Nat. Genet.">
        <title>Complete sequencing and characterization of 21,243 full-length human cDNAs.</title>
        <authorList>
            <person name="Ota T."/>
            <person name="Suzuki Y."/>
            <person name="Nishikawa T."/>
            <person name="Otsuki T."/>
            <person name="Sugiyama T."/>
            <person name="Irie R."/>
            <person name="Wakamatsu A."/>
            <person name="Hayashi K."/>
            <person name="Sato H."/>
            <person name="Nagai K."/>
            <person name="Kimura K."/>
            <person name="Makita H."/>
            <person name="Sekine M."/>
            <person name="Obayashi M."/>
            <person name="Nishi T."/>
            <person name="Shibahara T."/>
            <person name="Tanaka T."/>
            <person name="Ishii S."/>
            <person name="Yamamoto J."/>
            <person name="Saito K."/>
            <person name="Kawai Y."/>
            <person name="Isono Y."/>
            <person name="Nakamura Y."/>
            <person name="Nagahari K."/>
            <person name="Murakami K."/>
            <person name="Yasuda T."/>
            <person name="Iwayanagi T."/>
            <person name="Wagatsuma M."/>
            <person name="Shiratori A."/>
            <person name="Sudo H."/>
            <person name="Hosoiri T."/>
            <person name="Kaku Y."/>
            <person name="Kodaira H."/>
            <person name="Kondo H."/>
            <person name="Sugawara M."/>
            <person name="Takahashi M."/>
            <person name="Kanda K."/>
            <person name="Yokoi T."/>
            <person name="Furuya T."/>
            <person name="Kikkawa E."/>
            <person name="Omura Y."/>
            <person name="Abe K."/>
            <person name="Kamihara K."/>
            <person name="Katsuta N."/>
            <person name="Sato K."/>
            <person name="Tanikawa M."/>
            <person name="Yamazaki M."/>
            <person name="Ninomiya K."/>
            <person name="Ishibashi T."/>
            <person name="Yamashita H."/>
            <person name="Murakawa K."/>
            <person name="Fujimori K."/>
            <person name="Tanai H."/>
            <person name="Kimata M."/>
            <person name="Watanabe M."/>
            <person name="Hiraoka S."/>
            <person name="Chiba Y."/>
            <person name="Ishida S."/>
            <person name="Ono Y."/>
            <person name="Takiguchi S."/>
            <person name="Watanabe S."/>
            <person name="Yosida M."/>
            <person name="Hotuta T."/>
            <person name="Kusano J."/>
            <person name="Kanehori K."/>
            <person name="Takahashi-Fujii A."/>
            <person name="Hara H."/>
            <person name="Tanase T.-O."/>
            <person name="Nomura Y."/>
            <person name="Togiya S."/>
            <person name="Komai F."/>
            <person name="Hara R."/>
            <person name="Takeuchi K."/>
            <person name="Arita M."/>
            <person name="Imose N."/>
            <person name="Musashino K."/>
            <person name="Yuuki H."/>
            <person name="Oshima A."/>
            <person name="Sasaki N."/>
            <person name="Aotsuka S."/>
            <person name="Yoshikawa Y."/>
            <person name="Matsunawa H."/>
            <person name="Ichihara T."/>
            <person name="Shiohata N."/>
            <person name="Sano S."/>
            <person name="Moriya S."/>
            <person name="Momiyama H."/>
            <person name="Satoh N."/>
            <person name="Takami S."/>
            <person name="Terashima Y."/>
            <person name="Suzuki O."/>
            <person name="Nakagawa S."/>
            <person name="Senoh A."/>
            <person name="Mizoguchi H."/>
            <person name="Goto Y."/>
            <person name="Shimizu F."/>
            <person name="Wakebe H."/>
            <person name="Hishigaki H."/>
            <person name="Watanabe T."/>
            <person name="Sugiyama A."/>
            <person name="Takemoto M."/>
            <person name="Kawakami B."/>
            <person name="Yamazaki M."/>
            <person name="Watanabe K."/>
            <person name="Kumagai A."/>
            <person name="Itakura S."/>
            <person name="Fukuzumi Y."/>
            <person name="Fujimori Y."/>
            <person name="Komiyama M."/>
            <person name="Tashiro H."/>
            <person name="Tanigami A."/>
            <person name="Fujiwara T."/>
            <person name="Ono T."/>
            <person name="Yamada K."/>
            <person name="Fujii Y."/>
            <person name="Ozaki K."/>
            <person name="Hirao M."/>
            <person name="Ohmori Y."/>
            <person name="Kawabata A."/>
            <person name="Hikiji T."/>
            <person name="Kobatake N."/>
            <person name="Inagaki H."/>
            <person name="Ikema Y."/>
            <person name="Okamoto S."/>
            <person name="Okitani R."/>
            <person name="Kawakami T."/>
            <person name="Noguchi S."/>
            <person name="Itoh T."/>
            <person name="Shigeta K."/>
            <person name="Senba T."/>
            <person name="Matsumura K."/>
            <person name="Nakajima Y."/>
            <person name="Mizuno T."/>
            <person name="Morinaga M."/>
            <person name="Sasaki M."/>
            <person name="Togashi T."/>
            <person name="Oyama M."/>
            <person name="Hata H."/>
            <person name="Watanabe M."/>
            <person name="Komatsu T."/>
            <person name="Mizushima-Sugano J."/>
            <person name="Satoh T."/>
            <person name="Shirai Y."/>
            <person name="Takahashi Y."/>
            <person name="Nakagawa K."/>
            <person name="Okumura K."/>
            <person name="Nagase T."/>
            <person name="Nomura N."/>
            <person name="Kikuchi H."/>
            <person name="Masuho Y."/>
            <person name="Yamashita R."/>
            <person name="Nakai K."/>
            <person name="Yada T."/>
            <person name="Nakamura Y."/>
            <person name="Ohara O."/>
            <person name="Isogai T."/>
            <person name="Sugano S."/>
        </authorList>
    </citation>
    <scope>NUCLEOTIDE SEQUENCE [LARGE SCALE MRNA] (ISOFORM 1)</scope>
    <source>
        <tissue>Embryo</tissue>
    </source>
</reference>
<reference key="2">
    <citation type="journal article" date="2006" name="Nature">
        <title>The DNA sequence and biological annotation of human chromosome 1.</title>
        <authorList>
            <person name="Gregory S.G."/>
            <person name="Barlow K.F."/>
            <person name="McLay K.E."/>
            <person name="Kaul R."/>
            <person name="Swarbreck D."/>
            <person name="Dunham A."/>
            <person name="Scott C.E."/>
            <person name="Howe K.L."/>
            <person name="Woodfine K."/>
            <person name="Spencer C.C.A."/>
            <person name="Jones M.C."/>
            <person name="Gillson C."/>
            <person name="Searle S."/>
            <person name="Zhou Y."/>
            <person name="Kokocinski F."/>
            <person name="McDonald L."/>
            <person name="Evans R."/>
            <person name="Phillips K."/>
            <person name="Atkinson A."/>
            <person name="Cooper R."/>
            <person name="Jones C."/>
            <person name="Hall R.E."/>
            <person name="Andrews T.D."/>
            <person name="Lloyd C."/>
            <person name="Ainscough R."/>
            <person name="Almeida J.P."/>
            <person name="Ambrose K.D."/>
            <person name="Anderson F."/>
            <person name="Andrew R.W."/>
            <person name="Ashwell R.I.S."/>
            <person name="Aubin K."/>
            <person name="Babbage A.K."/>
            <person name="Bagguley C.L."/>
            <person name="Bailey J."/>
            <person name="Beasley H."/>
            <person name="Bethel G."/>
            <person name="Bird C.P."/>
            <person name="Bray-Allen S."/>
            <person name="Brown J.Y."/>
            <person name="Brown A.J."/>
            <person name="Buckley D."/>
            <person name="Burton J."/>
            <person name="Bye J."/>
            <person name="Carder C."/>
            <person name="Chapman J.C."/>
            <person name="Clark S.Y."/>
            <person name="Clarke G."/>
            <person name="Clee C."/>
            <person name="Cobley V."/>
            <person name="Collier R.E."/>
            <person name="Corby N."/>
            <person name="Coville G.J."/>
            <person name="Davies J."/>
            <person name="Deadman R."/>
            <person name="Dunn M."/>
            <person name="Earthrowl M."/>
            <person name="Ellington A.G."/>
            <person name="Errington H."/>
            <person name="Frankish A."/>
            <person name="Frankland J."/>
            <person name="French L."/>
            <person name="Garner P."/>
            <person name="Garnett J."/>
            <person name="Gay L."/>
            <person name="Ghori M.R.J."/>
            <person name="Gibson R."/>
            <person name="Gilby L.M."/>
            <person name="Gillett W."/>
            <person name="Glithero R.J."/>
            <person name="Grafham D.V."/>
            <person name="Griffiths C."/>
            <person name="Griffiths-Jones S."/>
            <person name="Grocock R."/>
            <person name="Hammond S."/>
            <person name="Harrison E.S.I."/>
            <person name="Hart E."/>
            <person name="Haugen E."/>
            <person name="Heath P.D."/>
            <person name="Holmes S."/>
            <person name="Holt K."/>
            <person name="Howden P.J."/>
            <person name="Hunt A.R."/>
            <person name="Hunt S.E."/>
            <person name="Hunter G."/>
            <person name="Isherwood J."/>
            <person name="James R."/>
            <person name="Johnson C."/>
            <person name="Johnson D."/>
            <person name="Joy A."/>
            <person name="Kay M."/>
            <person name="Kershaw J.K."/>
            <person name="Kibukawa M."/>
            <person name="Kimberley A.M."/>
            <person name="King A."/>
            <person name="Knights A.J."/>
            <person name="Lad H."/>
            <person name="Laird G."/>
            <person name="Lawlor S."/>
            <person name="Leongamornlert D.A."/>
            <person name="Lloyd D.M."/>
            <person name="Loveland J."/>
            <person name="Lovell J."/>
            <person name="Lush M.J."/>
            <person name="Lyne R."/>
            <person name="Martin S."/>
            <person name="Mashreghi-Mohammadi M."/>
            <person name="Matthews L."/>
            <person name="Matthews N.S.W."/>
            <person name="McLaren S."/>
            <person name="Milne S."/>
            <person name="Mistry S."/>
            <person name="Moore M.J.F."/>
            <person name="Nickerson T."/>
            <person name="O'Dell C.N."/>
            <person name="Oliver K."/>
            <person name="Palmeiri A."/>
            <person name="Palmer S.A."/>
            <person name="Parker A."/>
            <person name="Patel D."/>
            <person name="Pearce A.V."/>
            <person name="Peck A.I."/>
            <person name="Pelan S."/>
            <person name="Phelps K."/>
            <person name="Phillimore B.J."/>
            <person name="Plumb R."/>
            <person name="Rajan J."/>
            <person name="Raymond C."/>
            <person name="Rouse G."/>
            <person name="Saenphimmachak C."/>
            <person name="Sehra H.K."/>
            <person name="Sheridan E."/>
            <person name="Shownkeen R."/>
            <person name="Sims S."/>
            <person name="Skuce C.D."/>
            <person name="Smith M."/>
            <person name="Steward C."/>
            <person name="Subramanian S."/>
            <person name="Sycamore N."/>
            <person name="Tracey A."/>
            <person name="Tromans A."/>
            <person name="Van Helmond Z."/>
            <person name="Wall M."/>
            <person name="Wallis J.M."/>
            <person name="White S."/>
            <person name="Whitehead S.L."/>
            <person name="Wilkinson J.E."/>
            <person name="Willey D.L."/>
            <person name="Williams H."/>
            <person name="Wilming L."/>
            <person name="Wray P.W."/>
            <person name="Wu Z."/>
            <person name="Coulson A."/>
            <person name="Vaudin M."/>
            <person name="Sulston J.E."/>
            <person name="Durbin R.M."/>
            <person name="Hubbard T."/>
            <person name="Wooster R."/>
            <person name="Dunham I."/>
            <person name="Carter N.P."/>
            <person name="McVean G."/>
            <person name="Ross M.T."/>
            <person name="Harrow J."/>
            <person name="Olson M.V."/>
            <person name="Beck S."/>
            <person name="Rogers J."/>
            <person name="Bentley D.R."/>
        </authorList>
    </citation>
    <scope>NUCLEOTIDE SEQUENCE [LARGE SCALE GENOMIC DNA]</scope>
</reference>
<reference key="3">
    <citation type="submission" date="2005-09" db="EMBL/GenBank/DDBJ databases">
        <authorList>
            <person name="Mural R.J."/>
            <person name="Istrail S."/>
            <person name="Sutton G.G."/>
            <person name="Florea L."/>
            <person name="Halpern A.L."/>
            <person name="Mobarry C.M."/>
            <person name="Lippert R."/>
            <person name="Walenz B."/>
            <person name="Shatkay H."/>
            <person name="Dew I."/>
            <person name="Miller J.R."/>
            <person name="Flanigan M.J."/>
            <person name="Edwards N.J."/>
            <person name="Bolanos R."/>
            <person name="Fasulo D."/>
            <person name="Halldorsson B.V."/>
            <person name="Hannenhalli S."/>
            <person name="Turner R."/>
            <person name="Yooseph S."/>
            <person name="Lu F."/>
            <person name="Nusskern D.R."/>
            <person name="Shue B.C."/>
            <person name="Zheng X.H."/>
            <person name="Zhong F."/>
            <person name="Delcher A.L."/>
            <person name="Huson D.H."/>
            <person name="Kravitz S.A."/>
            <person name="Mouchard L."/>
            <person name="Reinert K."/>
            <person name="Remington K.A."/>
            <person name="Clark A.G."/>
            <person name="Waterman M.S."/>
            <person name="Eichler E.E."/>
            <person name="Adams M.D."/>
            <person name="Hunkapiller M.W."/>
            <person name="Myers E.W."/>
            <person name="Venter J.C."/>
        </authorList>
    </citation>
    <scope>NUCLEOTIDE SEQUENCE [LARGE SCALE GENOMIC DNA]</scope>
</reference>
<reference key="4">
    <citation type="journal article" date="2004" name="Genome Res.">
        <title>The status, quality, and expansion of the NIH full-length cDNA project: the Mammalian Gene Collection (MGC).</title>
        <authorList>
            <consortium name="The MGC Project Team"/>
        </authorList>
    </citation>
    <scope>NUCLEOTIDE SEQUENCE [LARGE SCALE MRNA] (ISOFORM 2)</scope>
    <source>
        <tissue>Lung</tissue>
        <tissue>Uterus</tissue>
    </source>
</reference>
<reference key="5">
    <citation type="journal article" date="2008" name="Proc. Natl. Acad. Sci. U.S.A.">
        <title>A quantitative atlas of mitotic phosphorylation.</title>
        <authorList>
            <person name="Dephoure N."/>
            <person name="Zhou C."/>
            <person name="Villen J."/>
            <person name="Beausoleil S.A."/>
            <person name="Bakalarski C.E."/>
            <person name="Elledge S.J."/>
            <person name="Gygi S.P."/>
        </authorList>
    </citation>
    <scope>PHOSPHORYLATION [LARGE SCALE ANALYSIS] AT SER-195</scope>
    <scope>IDENTIFICATION BY MASS SPECTROMETRY [LARGE SCALE ANALYSIS]</scope>
    <source>
        <tissue>Cervix carcinoma</tissue>
    </source>
</reference>
<reference key="6">
    <citation type="journal article" date="2009" name="Cancer Sci.">
        <title>Involvement of G-patch domain containing 2 overexpression in breast carcinogenesis.</title>
        <authorList>
            <person name="Lin M.L."/>
            <person name="Fukukawa C."/>
            <person name="Park J.H."/>
            <person name="Naito K."/>
            <person name="Kijima K."/>
            <person name="Shimo A."/>
            <person name="Ajiro M."/>
            <person name="Nishidate T."/>
            <person name="Nakamura Y."/>
            <person name="Katagiri T."/>
        </authorList>
    </citation>
    <scope>FUNCTION</scope>
    <scope>INTERACTION WITH DHX15</scope>
    <scope>SUBCELLULAR LOCATION</scope>
    <scope>TISSUE SPECIFICITY</scope>
</reference>
<reference key="7">
    <citation type="journal article" date="2009" name="Sci. Signal.">
        <title>Quantitative phosphoproteomic analysis of T cell receptor signaling reveals system-wide modulation of protein-protein interactions.</title>
        <authorList>
            <person name="Mayya V."/>
            <person name="Lundgren D.H."/>
            <person name="Hwang S.-I."/>
            <person name="Rezaul K."/>
            <person name="Wu L."/>
            <person name="Eng J.K."/>
            <person name="Rodionov V."/>
            <person name="Han D.K."/>
        </authorList>
    </citation>
    <scope>PHOSPHORYLATION [LARGE SCALE ANALYSIS] AT SER-115 AND SER-195</scope>
    <scope>IDENTIFICATION BY MASS SPECTROMETRY [LARGE SCALE ANALYSIS]</scope>
    <source>
        <tissue>Leukemic T-cell</tissue>
    </source>
</reference>
<reference key="8">
    <citation type="journal article" date="2010" name="Sci. Signal.">
        <title>Quantitative phosphoproteomics reveals widespread full phosphorylation site occupancy during mitosis.</title>
        <authorList>
            <person name="Olsen J.V."/>
            <person name="Vermeulen M."/>
            <person name="Santamaria A."/>
            <person name="Kumar C."/>
            <person name="Miller M.L."/>
            <person name="Jensen L.J."/>
            <person name="Gnad F."/>
            <person name="Cox J."/>
            <person name="Jensen T.S."/>
            <person name="Nigg E.A."/>
            <person name="Brunak S."/>
            <person name="Mann M."/>
        </authorList>
    </citation>
    <scope>PHOSPHORYLATION [LARGE SCALE ANALYSIS] AT SER-115 AND SER-117</scope>
    <scope>IDENTIFICATION BY MASS SPECTROMETRY [LARGE SCALE ANALYSIS]</scope>
    <source>
        <tissue>Cervix carcinoma</tissue>
    </source>
</reference>
<reference key="9">
    <citation type="journal article" date="2011" name="Sci. Signal.">
        <title>System-wide temporal characterization of the proteome and phosphoproteome of human embryonic stem cell differentiation.</title>
        <authorList>
            <person name="Rigbolt K.T."/>
            <person name="Prokhorova T.A."/>
            <person name="Akimov V."/>
            <person name="Henningsen J."/>
            <person name="Johansen P.T."/>
            <person name="Kratchmarova I."/>
            <person name="Kassem M."/>
            <person name="Mann M."/>
            <person name="Olsen J.V."/>
            <person name="Blagoev B."/>
        </authorList>
    </citation>
    <scope>PHOSPHORYLATION [LARGE SCALE ANALYSIS] AT SER-115 AND SER-117</scope>
    <scope>IDENTIFICATION BY MASS SPECTROMETRY [LARGE SCALE ANALYSIS]</scope>
</reference>
<reference key="10">
    <citation type="journal article" date="2013" name="J. Proteome Res.">
        <title>Toward a comprehensive characterization of a human cancer cell phosphoproteome.</title>
        <authorList>
            <person name="Zhou H."/>
            <person name="Di Palma S."/>
            <person name="Preisinger C."/>
            <person name="Peng M."/>
            <person name="Polat A.N."/>
            <person name="Heck A.J."/>
            <person name="Mohammed S."/>
        </authorList>
    </citation>
    <scope>PHOSPHORYLATION [LARGE SCALE ANALYSIS] AT SER-146 AND SER-195</scope>
    <scope>IDENTIFICATION BY MASS SPECTROMETRY [LARGE SCALE ANALYSIS]</scope>
    <source>
        <tissue>Cervix carcinoma</tissue>
    </source>
</reference>
<proteinExistence type="evidence at protein level"/>
<gene>
    <name type="primary">GPATCH2</name>
    <name type="synonym">GPATC2</name>
</gene>
<comment type="function">
    <text evidence="3">Enhances the ATPase activity of DHX15 in vitro.</text>
</comment>
<comment type="subunit">
    <text evidence="3">Interacts with DHX15.</text>
</comment>
<comment type="interaction">
    <interactant intactId="EBI-12068108">
        <id>Q9NW75-2</id>
    </interactant>
    <interactant intactId="EBI-347804">
        <id>P68400</id>
        <label>CSNK2A1</label>
    </interactant>
    <organismsDiffer>false</organismsDiffer>
    <experiments>3</experiments>
</comment>
<comment type="interaction">
    <interactant intactId="EBI-12068108">
        <id>Q9NW75-2</id>
    </interactant>
    <interactant intactId="EBI-744973">
        <id>Q9C005</id>
        <label>DPY30</label>
    </interactant>
    <organismsDiffer>false</organismsDiffer>
    <experiments>3</experiments>
</comment>
<comment type="interaction">
    <interactant intactId="EBI-12068108">
        <id>Q9NW75-2</id>
    </interactant>
    <interactant intactId="EBI-751857">
        <id>O15481</id>
        <label>MAGEB4</label>
    </interactant>
    <organismsDiffer>false</organismsDiffer>
    <experiments>3</experiments>
</comment>
<comment type="interaction">
    <interactant intactId="EBI-12068108">
        <id>Q9NW75-2</id>
    </interactant>
    <interactant intactId="EBI-79165">
        <id>Q9NRD5</id>
        <label>PICK1</label>
    </interactant>
    <organismsDiffer>false</organismsDiffer>
    <experiments>4</experiments>
</comment>
<comment type="interaction">
    <interactant intactId="EBI-12068108">
        <id>Q9NW75-2</id>
    </interactant>
    <interactant intactId="EBI-21353855">
        <id>Q99598</id>
        <label>TSNAX</label>
    </interactant>
    <organismsDiffer>false</organismsDiffer>
    <experiments>3</experiments>
</comment>
<comment type="subcellular location">
    <subcellularLocation>
        <location evidence="3">Nucleus speckle</location>
    </subcellularLocation>
    <subcellularLocation>
        <location evidence="3">Nucleus</location>
        <location evidence="3">Nucleolus</location>
    </subcellularLocation>
</comment>
<comment type="alternative products">
    <event type="alternative splicing"/>
    <isoform>
        <id>Q9NW75-1</id>
        <name>1</name>
        <sequence type="displayed"/>
    </isoform>
    <isoform>
        <id>Q9NW75-2</id>
        <name>2</name>
        <sequence type="described" ref="VSP_010527 VSP_010528"/>
    </isoform>
</comment>
<comment type="tissue specificity">
    <text evidence="3">Testis.</text>
</comment>
<sequence>MFGAAGRQPIGAPAAGNSWHFSRTMEELVHDLVSALEESSEQARGGFAETGDHSRSISCPLKRQARKRRGRKRRSYNVHHPWETGHCLSEGSDSSLEEPSKDYRENHNNNKKDHSDSDDQMLVAKRRPSSNLNNNVRGKRPLWHESDFAVDNVGNRTLRRRRKVKRMAVDLPQDISNKRTMTQPPEGCRDQDMDSDRAYQYQEFTKNKVKKRKLKIIRQGPKIQDEGVVLESEETNQTNKDKMECEEQKVSDELMSESDSSSLSSTDAGLFTNDEGRQGDDEQSDWFYEKESGGACGITGVVPWWEKEDPTELDKNVPDPVFESILTGSFPLMSHPSRRGFQARLSRLHGMSSKNIKKSGGTPTSMVPIPGPVGNKRMVHFSPDSHHHDHWFSPGARTEHDQHQLLRDNRAERGHKKNCSVRTASRQTSMHLGSLCTGDIKRRRKAAPLPGPTTAGFVGENAQPILENNIGNRMLQNMGWTPGSGLGRDGKGISEPIQAMQRPKGLGLGFPLPKSTSATTTPNAGKSA</sequence>
<dbReference type="EMBL" id="AK001114">
    <property type="protein sequence ID" value="BAA91509.1"/>
    <property type="molecule type" value="mRNA"/>
</dbReference>
<dbReference type="EMBL" id="AC096641">
    <property type="status" value="NOT_ANNOTATED_CDS"/>
    <property type="molecule type" value="Genomic_DNA"/>
</dbReference>
<dbReference type="EMBL" id="AL354659">
    <property type="status" value="NOT_ANNOTATED_CDS"/>
    <property type="molecule type" value="Genomic_DNA"/>
</dbReference>
<dbReference type="EMBL" id="CH471100">
    <property type="protein sequence ID" value="EAW93333.1"/>
    <property type="molecule type" value="Genomic_DNA"/>
</dbReference>
<dbReference type="EMBL" id="BC042193">
    <property type="protein sequence ID" value="AAH42193.1"/>
    <property type="molecule type" value="mRNA"/>
</dbReference>
<dbReference type="EMBL" id="BC063474">
    <property type="protein sequence ID" value="AAH63474.1"/>
    <property type="molecule type" value="mRNA"/>
</dbReference>
<dbReference type="CCDS" id="CCDS1518.1">
    <molecule id="Q9NW75-1"/>
</dbReference>
<dbReference type="CCDS" id="CCDS73031.1">
    <molecule id="Q9NW75-2"/>
</dbReference>
<dbReference type="RefSeq" id="NP_001284683.1">
    <molecule id="Q9NW75-2"/>
    <property type="nucleotide sequence ID" value="NM_001297754.3"/>
</dbReference>
<dbReference type="RefSeq" id="NP_060510.1">
    <molecule id="Q9NW75-1"/>
    <property type="nucleotide sequence ID" value="NM_018040.5"/>
</dbReference>
<dbReference type="BioGRID" id="120415">
    <property type="interactions" value="34"/>
</dbReference>
<dbReference type="FunCoup" id="Q9NW75">
    <property type="interactions" value="3542"/>
</dbReference>
<dbReference type="IntAct" id="Q9NW75">
    <property type="interactions" value="22"/>
</dbReference>
<dbReference type="STRING" id="9606.ENSP00000355902"/>
<dbReference type="GlyGen" id="Q9NW75">
    <property type="glycosylation" value="3 sites, 1 N-linked glycan (1 site), 1 O-linked glycan (1 site)"/>
</dbReference>
<dbReference type="iPTMnet" id="Q9NW75"/>
<dbReference type="PhosphoSitePlus" id="Q9NW75"/>
<dbReference type="BioMuta" id="GPATCH2"/>
<dbReference type="DMDM" id="48428171"/>
<dbReference type="jPOST" id="Q9NW75"/>
<dbReference type="MassIVE" id="Q9NW75"/>
<dbReference type="PaxDb" id="9606-ENSP00000355902"/>
<dbReference type="PeptideAtlas" id="Q9NW75"/>
<dbReference type="ProteomicsDB" id="82908">
    <molecule id="Q9NW75-1"/>
</dbReference>
<dbReference type="ProteomicsDB" id="82909">
    <molecule id="Q9NW75-2"/>
</dbReference>
<dbReference type="Pumba" id="Q9NW75"/>
<dbReference type="Antibodypedia" id="20729">
    <property type="antibodies" value="51 antibodies from 14 providers"/>
</dbReference>
<dbReference type="DNASU" id="55105"/>
<dbReference type="Ensembl" id="ENST00000366934.3">
    <molecule id="Q9NW75-2"/>
    <property type="protein sequence ID" value="ENSP00000355901.3"/>
    <property type="gene ID" value="ENSG00000092978.11"/>
</dbReference>
<dbReference type="Ensembl" id="ENST00000366935.8">
    <molecule id="Q9NW75-1"/>
    <property type="protein sequence ID" value="ENSP00000355902.3"/>
    <property type="gene ID" value="ENSG00000092978.11"/>
</dbReference>
<dbReference type="GeneID" id="55105"/>
<dbReference type="KEGG" id="hsa:55105"/>
<dbReference type="MANE-Select" id="ENST00000366935.8">
    <property type="protein sequence ID" value="ENSP00000355902.3"/>
    <property type="RefSeq nucleotide sequence ID" value="NM_018040.5"/>
    <property type="RefSeq protein sequence ID" value="NP_060510.1"/>
</dbReference>
<dbReference type="UCSC" id="uc001hlf.2">
    <molecule id="Q9NW75-1"/>
    <property type="organism name" value="human"/>
</dbReference>
<dbReference type="AGR" id="HGNC:25499"/>
<dbReference type="CTD" id="55105"/>
<dbReference type="DisGeNET" id="55105"/>
<dbReference type="GeneCards" id="GPATCH2"/>
<dbReference type="HGNC" id="HGNC:25499">
    <property type="gene designation" value="GPATCH2"/>
</dbReference>
<dbReference type="HPA" id="ENSG00000092978">
    <property type="expression patterns" value="Low tissue specificity"/>
</dbReference>
<dbReference type="MalaCards" id="GPATCH2"/>
<dbReference type="neXtProt" id="NX_Q9NW75"/>
<dbReference type="OpenTargets" id="ENSG00000092978"/>
<dbReference type="PharmGKB" id="PA162390064"/>
<dbReference type="VEuPathDB" id="HostDB:ENSG00000092978"/>
<dbReference type="eggNOG" id="KOG0154">
    <property type="taxonomic scope" value="Eukaryota"/>
</dbReference>
<dbReference type="GeneTree" id="ENSGT00410000025698"/>
<dbReference type="HOGENOM" id="CLU_041240_2_0_1"/>
<dbReference type="InParanoid" id="Q9NW75"/>
<dbReference type="OMA" id="HSWETGH"/>
<dbReference type="OrthoDB" id="6095487at2759"/>
<dbReference type="PAN-GO" id="Q9NW75">
    <property type="GO annotations" value="0 GO annotations based on evolutionary models"/>
</dbReference>
<dbReference type="PhylomeDB" id="Q9NW75"/>
<dbReference type="TreeFam" id="TF331954"/>
<dbReference type="PathwayCommons" id="Q9NW75"/>
<dbReference type="SignaLink" id="Q9NW75"/>
<dbReference type="BioGRID-ORCS" id="55105">
    <property type="hits" value="12 hits in 1156 CRISPR screens"/>
</dbReference>
<dbReference type="CD-CODE" id="91857CE7">
    <property type="entry name" value="Nucleolus"/>
</dbReference>
<dbReference type="ChiTaRS" id="GPATCH2">
    <property type="organism name" value="human"/>
</dbReference>
<dbReference type="GenomeRNAi" id="55105"/>
<dbReference type="Pharos" id="Q9NW75">
    <property type="development level" value="Tdark"/>
</dbReference>
<dbReference type="PRO" id="PR:Q9NW75"/>
<dbReference type="Proteomes" id="UP000005640">
    <property type="component" value="Chromosome 1"/>
</dbReference>
<dbReference type="RNAct" id="Q9NW75">
    <property type="molecule type" value="protein"/>
</dbReference>
<dbReference type="Bgee" id="ENSG00000092978">
    <property type="expression patterns" value="Expressed in buccal mucosa cell and 156 other cell types or tissues"/>
</dbReference>
<dbReference type="GO" id="GO:0016607">
    <property type="term" value="C:nuclear speck"/>
    <property type="evidence" value="ECO:0000314"/>
    <property type="project" value="HPA"/>
</dbReference>
<dbReference type="GO" id="GO:0005730">
    <property type="term" value="C:nucleolus"/>
    <property type="evidence" value="ECO:0007669"/>
    <property type="project" value="UniProtKB-SubCell"/>
</dbReference>
<dbReference type="GO" id="GO:0005634">
    <property type="term" value="C:nucleus"/>
    <property type="evidence" value="ECO:0000318"/>
    <property type="project" value="GO_Central"/>
</dbReference>
<dbReference type="GO" id="GO:0003676">
    <property type="term" value="F:nucleic acid binding"/>
    <property type="evidence" value="ECO:0007669"/>
    <property type="project" value="InterPro"/>
</dbReference>
<dbReference type="InterPro" id="IPR000467">
    <property type="entry name" value="G_patch_dom"/>
</dbReference>
<dbReference type="InterPro" id="IPR051189">
    <property type="entry name" value="Splicing_assoc_domain"/>
</dbReference>
<dbReference type="PANTHER" id="PTHR14195">
    <property type="entry name" value="G PATCH DOMAIN CONTAINING PROTEIN 2"/>
    <property type="match status" value="1"/>
</dbReference>
<dbReference type="Pfam" id="PF01585">
    <property type="entry name" value="G-patch"/>
    <property type="match status" value="1"/>
</dbReference>
<dbReference type="SMART" id="SM00443">
    <property type="entry name" value="G_patch"/>
    <property type="match status" value="1"/>
</dbReference>
<dbReference type="PROSITE" id="PS50174">
    <property type="entry name" value="G_PATCH"/>
    <property type="match status" value="1"/>
</dbReference>
<protein>
    <recommendedName>
        <fullName>G patch domain-containing protein 2</fullName>
    </recommendedName>
</protein>